<feature type="chain" id="PRO_0000210740" description="SEC14 cytosolic factor">
    <location>
        <begin position="1"/>
        <end position="302"/>
    </location>
</feature>
<feature type="domain" description="CRAL-TRIO" evidence="2">
    <location>
        <begin position="97"/>
        <end position="270"/>
    </location>
</feature>
<gene>
    <name type="primary">SEC14</name>
    <name type="ordered locus">CAGL0D04290g</name>
</gene>
<protein>
    <recommendedName>
        <fullName>SEC14 cytosolic factor</fullName>
    </recommendedName>
    <alternativeName>
        <fullName>Phosphatidylinositol/phosphatidylcholine transfer protein</fullName>
        <shortName>PI/PC TP</shortName>
    </alternativeName>
</protein>
<accession>P53989</accession>
<accession>Q6FVZ2</accession>
<sequence>MVSEAEFLASYPQKCPAGSLPGTPGNTDEAQEGALKQLRSELEAAGFKERLDDSTLLRFLRARKFDVALAKEMFENCEKWRKEYGTNTIMQDFHYDEKPLVAKYYPQYYHKTDKDGRPVYFEELGAVNLTEMEKITTQERMLKNLVWEYESVVNYRLPACSRAAGYLVETSCTVMDLKGISISSAYSVLSYVREASYISQNYYPERMGKFYLINAPFGFSTAFRLFKPFLDPVTVSKIFILGSSYQSELLKQIPAENLPSKFGGKSEVDEAAGGLYLSDIGPWRDAKYIGPEGEAPEMFSMK</sequence>
<keyword id="KW-0333">Golgi apparatus</keyword>
<keyword id="KW-0472">Membrane</keyword>
<keyword id="KW-0653">Protein transport</keyword>
<keyword id="KW-1185">Reference proteome</keyword>
<keyword id="KW-0813">Transport</keyword>
<dbReference type="EMBL" id="X97320">
    <property type="protein sequence ID" value="CAA65985.1"/>
    <property type="molecule type" value="Genomic_DNA"/>
</dbReference>
<dbReference type="EMBL" id="CR380950">
    <property type="protein sequence ID" value="CAG58513.2"/>
    <property type="molecule type" value="Genomic_DNA"/>
</dbReference>
<dbReference type="RefSeq" id="XP_445602.2">
    <property type="nucleotide sequence ID" value="XM_445602.2"/>
</dbReference>
<dbReference type="SMR" id="P53989"/>
<dbReference type="FunCoup" id="P53989">
    <property type="interactions" value="322"/>
</dbReference>
<dbReference type="STRING" id="284593.P53989"/>
<dbReference type="EnsemblFungi" id="CAGL0D04290g-T">
    <property type="protein sequence ID" value="CAGL0D04290g-T-p1"/>
    <property type="gene ID" value="CAGL0D04290g"/>
</dbReference>
<dbReference type="GeneID" id="2887243"/>
<dbReference type="KEGG" id="cgr:2887243"/>
<dbReference type="CGD" id="CAL0128111">
    <property type="gene designation" value="SEC14"/>
</dbReference>
<dbReference type="VEuPathDB" id="FungiDB:B1J91_D04290g"/>
<dbReference type="VEuPathDB" id="FungiDB:CAGL0D04290g"/>
<dbReference type="eggNOG" id="KOG1471">
    <property type="taxonomic scope" value="Eukaryota"/>
</dbReference>
<dbReference type="HOGENOM" id="CLU_014001_0_1_1"/>
<dbReference type="InParanoid" id="P53989"/>
<dbReference type="OMA" id="WAFSTVW"/>
<dbReference type="Proteomes" id="UP000002428">
    <property type="component" value="Chromosome D"/>
</dbReference>
<dbReference type="GO" id="GO:0005829">
    <property type="term" value="C:cytosol"/>
    <property type="evidence" value="ECO:0007669"/>
    <property type="project" value="EnsemblFungi"/>
</dbReference>
<dbReference type="GO" id="GO:0062040">
    <property type="term" value="C:fungal biofilm matrix"/>
    <property type="evidence" value="ECO:0000314"/>
    <property type="project" value="CGD"/>
</dbReference>
<dbReference type="GO" id="GO:0000139">
    <property type="term" value="C:Golgi membrane"/>
    <property type="evidence" value="ECO:0007669"/>
    <property type="project" value="UniProtKB-SubCell"/>
</dbReference>
<dbReference type="GO" id="GO:0008525">
    <property type="term" value="F:phosphatidylcholine transporter activity"/>
    <property type="evidence" value="ECO:0007669"/>
    <property type="project" value="EnsemblFungi"/>
</dbReference>
<dbReference type="GO" id="GO:0008526">
    <property type="term" value="F:phosphatidylinositol transfer activity"/>
    <property type="evidence" value="ECO:0007669"/>
    <property type="project" value="EnsemblFungi"/>
</dbReference>
<dbReference type="GO" id="GO:0030437">
    <property type="term" value="P:ascospore formation"/>
    <property type="evidence" value="ECO:0007669"/>
    <property type="project" value="EnsemblFungi"/>
</dbReference>
<dbReference type="GO" id="GO:0043001">
    <property type="term" value="P:Golgi to plasma membrane protein transport"/>
    <property type="evidence" value="ECO:0007669"/>
    <property type="project" value="EnsemblFungi"/>
</dbReference>
<dbReference type="GO" id="GO:0006896">
    <property type="term" value="P:Golgi to vacuole transport"/>
    <property type="evidence" value="ECO:0007669"/>
    <property type="project" value="EnsemblFungi"/>
</dbReference>
<dbReference type="GO" id="GO:0048194">
    <property type="term" value="P:Golgi vesicle budding"/>
    <property type="evidence" value="ECO:0007669"/>
    <property type="project" value="EnsemblFungi"/>
</dbReference>
<dbReference type="GO" id="GO:2001246">
    <property type="term" value="P:negative regulation of phosphatidylcholine biosynthetic process"/>
    <property type="evidence" value="ECO:0007669"/>
    <property type="project" value="EnsemblFungi"/>
</dbReference>
<dbReference type="GO" id="GO:1901352">
    <property type="term" value="P:negative regulation of phosphatidylglycerol biosynthetic process"/>
    <property type="evidence" value="ECO:0007669"/>
    <property type="project" value="EnsemblFungi"/>
</dbReference>
<dbReference type="GO" id="GO:0046488">
    <property type="term" value="P:phosphatidylinositol metabolic process"/>
    <property type="evidence" value="ECO:0007669"/>
    <property type="project" value="EnsemblFungi"/>
</dbReference>
<dbReference type="CDD" id="cd00170">
    <property type="entry name" value="SEC14"/>
    <property type="match status" value="1"/>
</dbReference>
<dbReference type="FunFam" id="1.10.8.20:FF:000005">
    <property type="entry name" value="SEC14 cytosolic factor"/>
    <property type="match status" value="1"/>
</dbReference>
<dbReference type="FunFam" id="3.40.525.10:FF:000011">
    <property type="entry name" value="SEC14 cytosolic factor"/>
    <property type="match status" value="1"/>
</dbReference>
<dbReference type="Gene3D" id="3.40.525.10">
    <property type="entry name" value="CRAL-TRIO lipid binding domain"/>
    <property type="match status" value="1"/>
</dbReference>
<dbReference type="Gene3D" id="1.10.8.20">
    <property type="entry name" value="N-terminal domain of phosphatidylinositol transfer protein sec14p"/>
    <property type="match status" value="1"/>
</dbReference>
<dbReference type="InterPro" id="IPR001251">
    <property type="entry name" value="CRAL-TRIO_dom"/>
</dbReference>
<dbReference type="InterPro" id="IPR036865">
    <property type="entry name" value="CRAL-TRIO_dom_sf"/>
</dbReference>
<dbReference type="InterPro" id="IPR011074">
    <property type="entry name" value="CRAL/TRIO_N_dom"/>
</dbReference>
<dbReference type="InterPro" id="IPR036273">
    <property type="entry name" value="CRAL/TRIO_N_dom_sf"/>
</dbReference>
<dbReference type="InterPro" id="IPR051026">
    <property type="entry name" value="PI/PC_transfer"/>
</dbReference>
<dbReference type="PANTHER" id="PTHR45657">
    <property type="entry name" value="CRAL-TRIO DOMAIN-CONTAINING PROTEIN YKL091C-RELATED"/>
    <property type="match status" value="1"/>
</dbReference>
<dbReference type="PANTHER" id="PTHR45657:SF1">
    <property type="entry name" value="CRAL-TRIO DOMAIN-CONTAINING PROTEIN YKL091C-RELATED"/>
    <property type="match status" value="1"/>
</dbReference>
<dbReference type="Pfam" id="PF00650">
    <property type="entry name" value="CRAL_TRIO"/>
    <property type="match status" value="1"/>
</dbReference>
<dbReference type="Pfam" id="PF03765">
    <property type="entry name" value="CRAL_TRIO_N"/>
    <property type="match status" value="1"/>
</dbReference>
<dbReference type="PRINTS" id="PR00180">
    <property type="entry name" value="CRETINALDHBP"/>
</dbReference>
<dbReference type="SMART" id="SM01100">
    <property type="entry name" value="CRAL_TRIO_N"/>
    <property type="match status" value="1"/>
</dbReference>
<dbReference type="SMART" id="SM00516">
    <property type="entry name" value="SEC14"/>
    <property type="match status" value="1"/>
</dbReference>
<dbReference type="SUPFAM" id="SSF52087">
    <property type="entry name" value="CRAL/TRIO domain"/>
    <property type="match status" value="1"/>
</dbReference>
<dbReference type="SUPFAM" id="SSF46938">
    <property type="entry name" value="CRAL/TRIO N-terminal domain"/>
    <property type="match status" value="1"/>
</dbReference>
<dbReference type="PROSITE" id="PS50191">
    <property type="entry name" value="CRAL_TRIO"/>
    <property type="match status" value="1"/>
</dbReference>
<reference key="1">
    <citation type="journal article" date="1997" name="Gene">
        <title>Nucleotide sequence of the gene coding for SEC14p in Candida (torulopsis) glabrata.</title>
        <authorList>
            <person name="Dundon W."/>
            <person name="Islam K."/>
        </authorList>
    </citation>
    <scope>NUCLEOTIDE SEQUENCE [GENOMIC DNA]</scope>
    <source>
        <strain>DSM 6425 / NCYC 350</strain>
    </source>
</reference>
<reference key="2">
    <citation type="journal article" date="2004" name="Nature">
        <title>Genome evolution in yeasts.</title>
        <authorList>
            <person name="Dujon B."/>
            <person name="Sherman D."/>
            <person name="Fischer G."/>
            <person name="Durrens P."/>
            <person name="Casaregola S."/>
            <person name="Lafontaine I."/>
            <person name="de Montigny J."/>
            <person name="Marck C."/>
            <person name="Neuveglise C."/>
            <person name="Talla E."/>
            <person name="Goffard N."/>
            <person name="Frangeul L."/>
            <person name="Aigle M."/>
            <person name="Anthouard V."/>
            <person name="Babour A."/>
            <person name="Barbe V."/>
            <person name="Barnay S."/>
            <person name="Blanchin S."/>
            <person name="Beckerich J.-M."/>
            <person name="Beyne E."/>
            <person name="Bleykasten C."/>
            <person name="Boisrame A."/>
            <person name="Boyer J."/>
            <person name="Cattolico L."/>
            <person name="Confanioleri F."/>
            <person name="de Daruvar A."/>
            <person name="Despons L."/>
            <person name="Fabre E."/>
            <person name="Fairhead C."/>
            <person name="Ferry-Dumazet H."/>
            <person name="Groppi A."/>
            <person name="Hantraye F."/>
            <person name="Hennequin C."/>
            <person name="Jauniaux N."/>
            <person name="Joyet P."/>
            <person name="Kachouri R."/>
            <person name="Kerrest A."/>
            <person name="Koszul R."/>
            <person name="Lemaire M."/>
            <person name="Lesur I."/>
            <person name="Ma L."/>
            <person name="Muller H."/>
            <person name="Nicaud J.-M."/>
            <person name="Nikolski M."/>
            <person name="Oztas S."/>
            <person name="Ozier-Kalogeropoulos O."/>
            <person name="Pellenz S."/>
            <person name="Potier S."/>
            <person name="Richard G.-F."/>
            <person name="Straub M.-L."/>
            <person name="Suleau A."/>
            <person name="Swennen D."/>
            <person name="Tekaia F."/>
            <person name="Wesolowski-Louvel M."/>
            <person name="Westhof E."/>
            <person name="Wirth B."/>
            <person name="Zeniou-Meyer M."/>
            <person name="Zivanovic Y."/>
            <person name="Bolotin-Fukuhara M."/>
            <person name="Thierry A."/>
            <person name="Bouchier C."/>
            <person name="Caudron B."/>
            <person name="Scarpelli C."/>
            <person name="Gaillardin C."/>
            <person name="Weissenbach J."/>
            <person name="Wincker P."/>
            <person name="Souciet J.-L."/>
        </authorList>
    </citation>
    <scope>NUCLEOTIDE SEQUENCE [LARGE SCALE GENOMIC DNA]</scope>
    <source>
        <strain>ATCC 2001 / BCRC 20586 / JCM 3761 / NBRC 0622 / NRRL Y-65 / CBS 138</strain>
    </source>
</reference>
<evidence type="ECO:0000250" key="1"/>
<evidence type="ECO:0000255" key="2">
    <source>
        <dbReference type="PROSITE-ProRule" id="PRU00056"/>
    </source>
</evidence>
<proteinExistence type="inferred from homology"/>
<name>SEC14_CANGA</name>
<comment type="function">
    <text evidence="1">Required for transport of secretory proteins from the Golgi complex. Catalyzes the transfer of phosphatidylinositol and phosphatidylcholine between membranes in vitro (By similarity).</text>
</comment>
<comment type="subcellular location">
    <subcellularLocation>
        <location evidence="1">Golgi apparatus membrane</location>
        <topology evidence="1">Peripheral membrane protein</topology>
    </subcellularLocation>
</comment>
<organism>
    <name type="scientific">Candida glabrata (strain ATCC 2001 / BCRC 20586 / JCM 3761 / NBRC 0622 / NRRL Y-65 / CBS 138)</name>
    <name type="common">Yeast</name>
    <name type="synonym">Nakaseomyces glabratus</name>
    <dbReference type="NCBI Taxonomy" id="284593"/>
    <lineage>
        <taxon>Eukaryota</taxon>
        <taxon>Fungi</taxon>
        <taxon>Dikarya</taxon>
        <taxon>Ascomycota</taxon>
        <taxon>Saccharomycotina</taxon>
        <taxon>Saccharomycetes</taxon>
        <taxon>Saccharomycetales</taxon>
        <taxon>Saccharomycetaceae</taxon>
        <taxon>Nakaseomyces</taxon>
    </lineage>
</organism>